<proteinExistence type="evidence at protein level"/>
<reference key="1">
    <citation type="journal article" date="2000" name="Nature">
        <title>Sequence and analysis of chromosome 3 of the plant Arabidopsis thaliana.</title>
        <authorList>
            <person name="Salanoubat M."/>
            <person name="Lemcke K."/>
            <person name="Rieger M."/>
            <person name="Ansorge W."/>
            <person name="Unseld M."/>
            <person name="Fartmann B."/>
            <person name="Valle G."/>
            <person name="Bloecker H."/>
            <person name="Perez-Alonso M."/>
            <person name="Obermaier B."/>
            <person name="Delseny M."/>
            <person name="Boutry M."/>
            <person name="Grivell L.A."/>
            <person name="Mache R."/>
            <person name="Puigdomenech P."/>
            <person name="De Simone V."/>
            <person name="Choisne N."/>
            <person name="Artiguenave F."/>
            <person name="Robert C."/>
            <person name="Brottier P."/>
            <person name="Wincker P."/>
            <person name="Cattolico L."/>
            <person name="Weissenbach J."/>
            <person name="Saurin W."/>
            <person name="Quetier F."/>
            <person name="Schaefer M."/>
            <person name="Mueller-Auer S."/>
            <person name="Gabel C."/>
            <person name="Fuchs M."/>
            <person name="Benes V."/>
            <person name="Wurmbach E."/>
            <person name="Drzonek H."/>
            <person name="Erfle H."/>
            <person name="Jordan N."/>
            <person name="Bangert S."/>
            <person name="Wiedelmann R."/>
            <person name="Kranz H."/>
            <person name="Voss H."/>
            <person name="Holland R."/>
            <person name="Brandt P."/>
            <person name="Nyakatura G."/>
            <person name="Vezzi A."/>
            <person name="D'Angelo M."/>
            <person name="Pallavicini A."/>
            <person name="Toppo S."/>
            <person name="Simionati B."/>
            <person name="Conrad A."/>
            <person name="Hornischer K."/>
            <person name="Kauer G."/>
            <person name="Loehnert T.-H."/>
            <person name="Nordsiek G."/>
            <person name="Reichelt J."/>
            <person name="Scharfe M."/>
            <person name="Schoen O."/>
            <person name="Bargues M."/>
            <person name="Terol J."/>
            <person name="Climent J."/>
            <person name="Navarro P."/>
            <person name="Collado C."/>
            <person name="Perez-Perez A."/>
            <person name="Ottenwaelder B."/>
            <person name="Duchemin D."/>
            <person name="Cooke R."/>
            <person name="Laudie M."/>
            <person name="Berger-Llauro C."/>
            <person name="Purnelle B."/>
            <person name="Masuy D."/>
            <person name="de Haan M."/>
            <person name="Maarse A.C."/>
            <person name="Alcaraz J.-P."/>
            <person name="Cottet A."/>
            <person name="Casacuberta E."/>
            <person name="Monfort A."/>
            <person name="Argiriou A."/>
            <person name="Flores M."/>
            <person name="Liguori R."/>
            <person name="Vitale D."/>
            <person name="Mannhaupt G."/>
            <person name="Haase D."/>
            <person name="Schoof H."/>
            <person name="Rudd S."/>
            <person name="Zaccaria P."/>
            <person name="Mewes H.-W."/>
            <person name="Mayer K.F.X."/>
            <person name="Kaul S."/>
            <person name="Town C.D."/>
            <person name="Koo H.L."/>
            <person name="Tallon L.J."/>
            <person name="Jenkins J."/>
            <person name="Rooney T."/>
            <person name="Rizzo M."/>
            <person name="Walts A."/>
            <person name="Utterback T."/>
            <person name="Fujii C.Y."/>
            <person name="Shea T.P."/>
            <person name="Creasy T.H."/>
            <person name="Haas B."/>
            <person name="Maiti R."/>
            <person name="Wu D."/>
            <person name="Peterson J."/>
            <person name="Van Aken S."/>
            <person name="Pai G."/>
            <person name="Militscher J."/>
            <person name="Sellers P."/>
            <person name="Gill J.E."/>
            <person name="Feldblyum T.V."/>
            <person name="Preuss D."/>
            <person name="Lin X."/>
            <person name="Nierman W.C."/>
            <person name="Salzberg S.L."/>
            <person name="White O."/>
            <person name="Venter J.C."/>
            <person name="Fraser C.M."/>
            <person name="Kaneko T."/>
            <person name="Nakamura Y."/>
            <person name="Sato S."/>
            <person name="Kato T."/>
            <person name="Asamizu E."/>
            <person name="Sasamoto S."/>
            <person name="Kimura T."/>
            <person name="Idesawa K."/>
            <person name="Kawashima K."/>
            <person name="Kishida Y."/>
            <person name="Kiyokawa C."/>
            <person name="Kohara M."/>
            <person name="Matsumoto M."/>
            <person name="Matsuno A."/>
            <person name="Muraki A."/>
            <person name="Nakayama S."/>
            <person name="Nakazaki N."/>
            <person name="Shinpo S."/>
            <person name="Takeuchi C."/>
            <person name="Wada T."/>
            <person name="Watanabe A."/>
            <person name="Yamada M."/>
            <person name="Yasuda M."/>
            <person name="Tabata S."/>
        </authorList>
    </citation>
    <scope>NUCLEOTIDE SEQUENCE [LARGE SCALE GENOMIC DNA]</scope>
    <source>
        <strain>cv. Columbia</strain>
    </source>
</reference>
<reference key="2">
    <citation type="journal article" date="2017" name="Plant J.">
        <title>Araport11: a complete reannotation of the Arabidopsis thaliana reference genome.</title>
        <authorList>
            <person name="Cheng C.Y."/>
            <person name="Krishnakumar V."/>
            <person name="Chan A.P."/>
            <person name="Thibaud-Nissen F."/>
            <person name="Schobel S."/>
            <person name="Town C.D."/>
        </authorList>
    </citation>
    <scope>GENOME REANNOTATION</scope>
    <source>
        <strain>cv. Columbia</strain>
    </source>
</reference>
<reference key="3">
    <citation type="journal article" date="2002" name="Science">
        <title>Functional annotation of a full-length Arabidopsis cDNA collection.</title>
        <authorList>
            <person name="Seki M."/>
            <person name="Narusaka M."/>
            <person name="Kamiya A."/>
            <person name="Ishida J."/>
            <person name="Satou M."/>
            <person name="Sakurai T."/>
            <person name="Nakajima M."/>
            <person name="Enju A."/>
            <person name="Akiyama K."/>
            <person name="Oono Y."/>
            <person name="Muramatsu M."/>
            <person name="Hayashizaki Y."/>
            <person name="Kawai J."/>
            <person name="Carninci P."/>
            <person name="Itoh M."/>
            <person name="Ishii Y."/>
            <person name="Arakawa T."/>
            <person name="Shibata K."/>
            <person name="Shinagawa A."/>
            <person name="Shinozaki K."/>
        </authorList>
    </citation>
    <scope>NUCLEOTIDE SEQUENCE [LARGE SCALE MRNA]</scope>
    <source>
        <strain>cv. Columbia</strain>
    </source>
</reference>
<reference key="4">
    <citation type="journal article" date="2003" name="Science">
        <title>Empirical analysis of transcriptional activity in the Arabidopsis genome.</title>
        <authorList>
            <person name="Yamada K."/>
            <person name="Lim J."/>
            <person name="Dale J.M."/>
            <person name="Chen H."/>
            <person name="Shinn P."/>
            <person name="Palm C.J."/>
            <person name="Southwick A.M."/>
            <person name="Wu H.C."/>
            <person name="Kim C.J."/>
            <person name="Nguyen M."/>
            <person name="Pham P.K."/>
            <person name="Cheuk R.F."/>
            <person name="Karlin-Newmann G."/>
            <person name="Liu S.X."/>
            <person name="Lam B."/>
            <person name="Sakano H."/>
            <person name="Wu T."/>
            <person name="Yu G."/>
            <person name="Miranda M."/>
            <person name="Quach H.L."/>
            <person name="Tripp M."/>
            <person name="Chang C.H."/>
            <person name="Lee J.M."/>
            <person name="Toriumi M.J."/>
            <person name="Chan M.M."/>
            <person name="Tang C.C."/>
            <person name="Onodera C.S."/>
            <person name="Deng J.M."/>
            <person name="Akiyama K."/>
            <person name="Ansari Y."/>
            <person name="Arakawa T."/>
            <person name="Banh J."/>
            <person name="Banno F."/>
            <person name="Bowser L."/>
            <person name="Brooks S.Y."/>
            <person name="Carninci P."/>
            <person name="Chao Q."/>
            <person name="Choy N."/>
            <person name="Enju A."/>
            <person name="Goldsmith A.D."/>
            <person name="Gurjal M."/>
            <person name="Hansen N.F."/>
            <person name="Hayashizaki Y."/>
            <person name="Johnson-Hopson C."/>
            <person name="Hsuan V.W."/>
            <person name="Iida K."/>
            <person name="Karnes M."/>
            <person name="Khan S."/>
            <person name="Koesema E."/>
            <person name="Ishida J."/>
            <person name="Jiang P.X."/>
            <person name="Jones T."/>
            <person name="Kawai J."/>
            <person name="Kamiya A."/>
            <person name="Meyers C."/>
            <person name="Nakajima M."/>
            <person name="Narusaka M."/>
            <person name="Seki M."/>
            <person name="Sakurai T."/>
            <person name="Satou M."/>
            <person name="Tamse R."/>
            <person name="Vaysberg M."/>
            <person name="Wallender E.K."/>
            <person name="Wong C."/>
            <person name="Yamamura Y."/>
            <person name="Yuan S."/>
            <person name="Shinozaki K."/>
            <person name="Davis R.W."/>
            <person name="Theologis A."/>
            <person name="Ecker J.R."/>
        </authorList>
    </citation>
    <scope>NUCLEOTIDE SEQUENCE [LARGE SCALE MRNA]</scope>
    <source>
        <strain>cv. Columbia</strain>
    </source>
</reference>
<reference key="5">
    <citation type="journal article" date="1999" name="Gene">
        <title>Arabidopsis thaliana RNA polymerase II subunits related to yeast and human RPB5.</title>
        <authorList>
            <person name="Larkin R.M."/>
            <person name="Hagen G."/>
            <person name="Guilfoyle T.J."/>
        </authorList>
    </citation>
    <scope>NUCLEOTIDE SEQUENCE [MRNA] OF 18-222</scope>
    <scope>SUBCELLULAR LOCATION</scope>
</reference>
<reference key="6">
    <citation type="journal article" date="2009" name="Mol. Cell">
        <title>Subunit compositions of the RNA-silencing enzymes Pol IV and Pol V reveal their origins as specialized forms of RNA polymerase II.</title>
        <authorList>
            <person name="Ream T.S."/>
            <person name="Haag J.R."/>
            <person name="Wierzbicki A.T."/>
            <person name="Nicora C.D."/>
            <person name="Norbeck A.D."/>
            <person name="Zhu J.K."/>
            <person name="Hagen G."/>
            <person name="Guilfoyle T.J."/>
            <person name="Pasa-Tolic L."/>
            <person name="Pikaard C.S."/>
        </authorList>
    </citation>
    <scope>FUNCTION</scope>
    <scope>IDENTIFICATION BY MASS SPECTROMETRY</scope>
    <scope>SUBUNIT</scope>
    <scope>NOMENCLATURE</scope>
</reference>
<reference key="7">
    <citation type="journal article" date="2009" name="Proc. Natl. Acad. Sci. U.S.A.">
        <title>PolV(PolIVb) function in RNA-directed DNA methylation requires the conserved active site and an additional plant-specific subunit.</title>
        <authorList>
            <person name="Lahmy S."/>
            <person name="Pontier D."/>
            <person name="Cavel E."/>
            <person name="Vega D."/>
            <person name="El-Shami M."/>
            <person name="Kanno T."/>
            <person name="Lagrange T."/>
        </authorList>
    </citation>
    <scope>IDENTIFICATION</scope>
    <scope>SUBUNIT</scope>
    <scope>TISSUE SPECIFICITY</scope>
    <scope>DISRUPTION PHENOTYPE</scope>
</reference>
<reference key="8">
    <citation type="journal article" date="2011" name="Epigenetics">
        <title>Identification of genes required for de novo DNA methylation in Arabidopsis.</title>
        <authorList>
            <person name="Greenberg M.V."/>
            <person name="Ausin I."/>
            <person name="Chan S.W."/>
            <person name="Cokus S.J."/>
            <person name="Cuperus J.T."/>
            <person name="Feng S."/>
            <person name="Law J.A."/>
            <person name="Chu C."/>
            <person name="Pellegrini M."/>
            <person name="Carrington J.C."/>
            <person name="Jacobsen S.E."/>
        </authorList>
    </citation>
    <scope>FUNCTION</scope>
    <scope>DISRUPTION PHENOTYPE</scope>
</reference>
<gene>
    <name type="primary">NRPE5A</name>
    <name type="synonym">RPB23.7</name>
    <name type="synonym">RPB5b</name>
    <name type="ordered locus">At3g57080</name>
    <name type="ORF">F24I3.160</name>
</gene>
<keyword id="KW-0002">3D-structure</keyword>
<keyword id="KW-0539">Nucleus</keyword>
<keyword id="KW-1185">Reference proteome</keyword>
<protein>
    <recommendedName>
        <fullName>DNA-directed RNA polymerase V subunit 5A</fullName>
    </recommendedName>
</protein>
<accession>Q9M1J2</accession>
<sequence length="222" mass="25586">MEVKGKETASVLCLSKYVDLSSEESHRYYLARRNGLQMLRDRGYEVSDEDINLSLHDFRTVYGERPDVDRLRISALHRSDSTKKVKIVFFGTSMVKVNAIRSVVADILSQETITGLILVLQNHVTNQALKAIELFSFKVEIFQITDLLVNITKHSLKPQHQVLNDEEKTTLLKKFSIEEKQLPRISKKDAIVRYYGLEKGQVVKVNYRGELTESHVAFRCVW</sequence>
<evidence type="ECO:0000269" key="1">
    <source>
    </source>
</evidence>
<evidence type="ECO:0000269" key="2">
    <source>
    </source>
</evidence>
<evidence type="ECO:0000269" key="3">
    <source>
    </source>
</evidence>
<evidence type="ECO:0000269" key="4">
    <source>
    </source>
</evidence>
<evidence type="ECO:0000305" key="5"/>
<feature type="chain" id="PRO_0000423327" description="DNA-directed RNA polymerase V subunit 5A">
    <location>
        <begin position="1"/>
        <end position="222"/>
    </location>
</feature>
<name>RPE5A_ARATH</name>
<dbReference type="EMBL" id="AL138655">
    <property type="protein sequence ID" value="CAB72178.1"/>
    <property type="molecule type" value="Genomic_DNA"/>
</dbReference>
<dbReference type="EMBL" id="CP002686">
    <property type="protein sequence ID" value="AEE79612.1"/>
    <property type="molecule type" value="Genomic_DNA"/>
</dbReference>
<dbReference type="EMBL" id="AK118958">
    <property type="protein sequence ID" value="BAC43537.1"/>
    <property type="molecule type" value="mRNA"/>
</dbReference>
<dbReference type="EMBL" id="BT005410">
    <property type="protein sequence ID" value="AAO63830.1"/>
    <property type="molecule type" value="mRNA"/>
</dbReference>
<dbReference type="PIR" id="T47768">
    <property type="entry name" value="T47768"/>
</dbReference>
<dbReference type="PDB" id="8HYJ">
    <property type="method" value="EM"/>
    <property type="resolution" value="4.30 A"/>
    <property type="chains" value="E=1-222"/>
</dbReference>
<dbReference type="PDBsum" id="8HYJ"/>
<dbReference type="EMDB" id="EMD-35086"/>
<dbReference type="SMR" id="Q9M1J2"/>
<dbReference type="BioGRID" id="10191">
    <property type="interactions" value="2"/>
</dbReference>
<dbReference type="DIP" id="DIP-48680N"/>
<dbReference type="FunCoup" id="Q9M1J2">
    <property type="interactions" value="110"/>
</dbReference>
<dbReference type="IntAct" id="Q9M1J2">
    <property type="interactions" value="1"/>
</dbReference>
<dbReference type="STRING" id="3702.Q9M1J2"/>
<dbReference type="PaxDb" id="3702-AT3G57080.1"/>
<dbReference type="ProteomicsDB" id="228206"/>
<dbReference type="EnsemblPlants" id="AT3G57080.1">
    <property type="protein sequence ID" value="AT3G57080.1"/>
    <property type="gene ID" value="AT3G57080"/>
</dbReference>
<dbReference type="GeneID" id="824875"/>
<dbReference type="Gramene" id="AT3G57080.1">
    <property type="protein sequence ID" value="AT3G57080.1"/>
    <property type="gene ID" value="AT3G57080"/>
</dbReference>
<dbReference type="KEGG" id="ath:AT3G57080"/>
<dbReference type="Araport" id="AT3G57080"/>
<dbReference type="TAIR" id="AT3G57080">
    <property type="gene designation" value="NRPE5"/>
</dbReference>
<dbReference type="eggNOG" id="KOG3218">
    <property type="taxonomic scope" value="Eukaryota"/>
</dbReference>
<dbReference type="HOGENOM" id="CLU_058320_0_0_1"/>
<dbReference type="InParanoid" id="Q9M1J2"/>
<dbReference type="OMA" id="YCGPGIV"/>
<dbReference type="OrthoDB" id="248779at2759"/>
<dbReference type="PhylomeDB" id="Q9M1J2"/>
<dbReference type="PRO" id="PR:Q9M1J2"/>
<dbReference type="Proteomes" id="UP000006548">
    <property type="component" value="Chromosome 3"/>
</dbReference>
<dbReference type="ExpressionAtlas" id="Q9M1J2">
    <property type="expression patterns" value="baseline and differential"/>
</dbReference>
<dbReference type="GO" id="GO:0000419">
    <property type="term" value="C:RNA polymerase V complex"/>
    <property type="evidence" value="ECO:0000314"/>
    <property type="project" value="UniProtKB"/>
</dbReference>
<dbReference type="GO" id="GO:0003677">
    <property type="term" value="F:DNA binding"/>
    <property type="evidence" value="ECO:0007669"/>
    <property type="project" value="InterPro"/>
</dbReference>
<dbReference type="GO" id="GO:0003899">
    <property type="term" value="F:DNA-directed RNA polymerase activity"/>
    <property type="evidence" value="ECO:0007669"/>
    <property type="project" value="InterPro"/>
</dbReference>
<dbReference type="GO" id="GO:0006351">
    <property type="term" value="P:DNA-templated transcription"/>
    <property type="evidence" value="ECO:0007669"/>
    <property type="project" value="InterPro"/>
</dbReference>
<dbReference type="FunFam" id="3.40.1340.10:FF:000001">
    <property type="entry name" value="DNA-directed RNA polymerases I, II, and III subunit RPABC1"/>
    <property type="match status" value="1"/>
</dbReference>
<dbReference type="FunFam" id="3.90.940.20:FF:000001">
    <property type="entry name" value="DNA-directed RNA polymerases I, II, and III subunit RPABC1"/>
    <property type="match status" value="1"/>
</dbReference>
<dbReference type="Gene3D" id="3.40.1340.10">
    <property type="entry name" value="RNA polymerase, Rpb5, N-terminal domain"/>
    <property type="match status" value="1"/>
</dbReference>
<dbReference type="Gene3D" id="3.90.940.20">
    <property type="entry name" value="RPB5-like RNA polymerase subunit"/>
    <property type="match status" value="1"/>
</dbReference>
<dbReference type="InterPro" id="IPR014381">
    <property type="entry name" value="Arch_Rpo5/euc_Rpb5"/>
</dbReference>
<dbReference type="InterPro" id="IPR005571">
    <property type="entry name" value="RNA_pol_Rpb5_N"/>
</dbReference>
<dbReference type="InterPro" id="IPR036710">
    <property type="entry name" value="RNA_pol_Rpb5_N_sf"/>
</dbReference>
<dbReference type="InterPro" id="IPR000783">
    <property type="entry name" value="RNA_pol_subH/Rpb5_C"/>
</dbReference>
<dbReference type="InterPro" id="IPR035913">
    <property type="entry name" value="RPB5-like_sf"/>
</dbReference>
<dbReference type="PANTHER" id="PTHR10535:SF2">
    <property type="entry name" value="DNA-DIRECTED RNA POLYMERASE V SUBUNIT 5A"/>
    <property type="match status" value="1"/>
</dbReference>
<dbReference type="PANTHER" id="PTHR10535">
    <property type="entry name" value="DNA-DIRECTED RNA POLYMERASES I, II, AND III SUBUNIT RPABC1"/>
    <property type="match status" value="1"/>
</dbReference>
<dbReference type="Pfam" id="PF01191">
    <property type="entry name" value="RNA_pol_Rpb5_C"/>
    <property type="match status" value="1"/>
</dbReference>
<dbReference type="Pfam" id="PF03871">
    <property type="entry name" value="RNA_pol_Rpb5_N"/>
    <property type="match status" value="1"/>
</dbReference>
<dbReference type="PIRSF" id="PIRSF000747">
    <property type="entry name" value="RPB5"/>
    <property type="match status" value="1"/>
</dbReference>
<dbReference type="SUPFAM" id="SSF53036">
    <property type="entry name" value="Eukaryotic RPB5 N-terminal domain"/>
    <property type="match status" value="1"/>
</dbReference>
<dbReference type="SUPFAM" id="SSF55287">
    <property type="entry name" value="RPB5-like RNA polymerase subunit"/>
    <property type="match status" value="1"/>
</dbReference>
<comment type="function">
    <text evidence="2 4">DNA-dependent RNA polymerase catalyzes the transcription of DNA into RNA using the four ribonucleoside triphosphates as substrates. Component of RNA polymerase V involved in RNA-directed DNA methylation-dependent (RdDM) silencing of endogenous repeated sequences, including transposable elements. Required for establishment of DNA methylation.</text>
</comment>
<comment type="subunit">
    <text evidence="2 3">Component of the RNA polymerase V complex.</text>
</comment>
<comment type="interaction">
    <interactant intactId="EBI-15751359">
        <id>Q9M1J2</id>
    </interactant>
    <interactant intactId="EBI-2352263">
        <id>Q5D869</id>
        <label>NRPE1</label>
    </interactant>
    <organismsDiffer>false</organismsDiffer>
    <experiments>2</experiments>
</comment>
<comment type="subcellular location">
    <subcellularLocation>
        <location evidence="1">Nucleus</location>
    </subcellularLocation>
</comment>
<comment type="tissue specificity">
    <text evidence="3">Expressed in roots, leaves, siliques and seeds, and to a lower level, in flower buds and flowers.</text>
</comment>
<comment type="disruption phenotype">
    <text evidence="3 4">Partial loss of methylation and silencing of RdDM targets, probably due to the redundancy with NRPE5B.</text>
</comment>
<comment type="similarity">
    <text evidence="5">Belongs to the archaeal Rpo5/eukaryotic RPB5 RNA polymerase subunit family.</text>
</comment>
<organism>
    <name type="scientific">Arabidopsis thaliana</name>
    <name type="common">Mouse-ear cress</name>
    <dbReference type="NCBI Taxonomy" id="3702"/>
    <lineage>
        <taxon>Eukaryota</taxon>
        <taxon>Viridiplantae</taxon>
        <taxon>Streptophyta</taxon>
        <taxon>Embryophyta</taxon>
        <taxon>Tracheophyta</taxon>
        <taxon>Spermatophyta</taxon>
        <taxon>Magnoliopsida</taxon>
        <taxon>eudicotyledons</taxon>
        <taxon>Gunneridae</taxon>
        <taxon>Pentapetalae</taxon>
        <taxon>rosids</taxon>
        <taxon>malvids</taxon>
        <taxon>Brassicales</taxon>
        <taxon>Brassicaceae</taxon>
        <taxon>Camelineae</taxon>
        <taxon>Arabidopsis</taxon>
    </lineage>
</organism>